<feature type="chain" id="PRO_1000009898" description="Uracil-DNA glycosylase">
    <location>
        <begin position="1"/>
        <end position="223"/>
    </location>
</feature>
<feature type="active site" description="Proton acceptor" evidence="1">
    <location>
        <position position="61"/>
    </location>
</feature>
<dbReference type="EC" id="3.2.2.27" evidence="1"/>
<dbReference type="EMBL" id="CP000436">
    <property type="protein sequence ID" value="ABI24758.1"/>
    <property type="molecule type" value="Genomic_DNA"/>
</dbReference>
<dbReference type="SMR" id="Q0I271"/>
<dbReference type="KEGG" id="hso:HS_0481"/>
<dbReference type="eggNOG" id="COG0692">
    <property type="taxonomic scope" value="Bacteria"/>
</dbReference>
<dbReference type="HOGENOM" id="CLU_032162_3_0_6"/>
<dbReference type="GO" id="GO:0005737">
    <property type="term" value="C:cytoplasm"/>
    <property type="evidence" value="ECO:0007669"/>
    <property type="project" value="UniProtKB-SubCell"/>
</dbReference>
<dbReference type="GO" id="GO:0004844">
    <property type="term" value="F:uracil DNA N-glycosylase activity"/>
    <property type="evidence" value="ECO:0007669"/>
    <property type="project" value="UniProtKB-UniRule"/>
</dbReference>
<dbReference type="GO" id="GO:0097510">
    <property type="term" value="P:base-excision repair, AP site formation via deaminated base removal"/>
    <property type="evidence" value="ECO:0007669"/>
    <property type="project" value="TreeGrafter"/>
</dbReference>
<dbReference type="CDD" id="cd10027">
    <property type="entry name" value="UDG-F1-like"/>
    <property type="match status" value="1"/>
</dbReference>
<dbReference type="FunFam" id="3.40.470.10:FF:000001">
    <property type="entry name" value="Uracil-DNA glycosylase"/>
    <property type="match status" value="1"/>
</dbReference>
<dbReference type="Gene3D" id="3.40.470.10">
    <property type="entry name" value="Uracil-DNA glycosylase-like domain"/>
    <property type="match status" value="1"/>
</dbReference>
<dbReference type="HAMAP" id="MF_00148">
    <property type="entry name" value="UDG"/>
    <property type="match status" value="1"/>
</dbReference>
<dbReference type="InterPro" id="IPR002043">
    <property type="entry name" value="UDG_fam1"/>
</dbReference>
<dbReference type="InterPro" id="IPR018085">
    <property type="entry name" value="Ura-DNA_Glyclase_AS"/>
</dbReference>
<dbReference type="InterPro" id="IPR005122">
    <property type="entry name" value="Uracil-DNA_glycosylase-like"/>
</dbReference>
<dbReference type="InterPro" id="IPR036895">
    <property type="entry name" value="Uracil-DNA_glycosylase-like_sf"/>
</dbReference>
<dbReference type="NCBIfam" id="NF003588">
    <property type="entry name" value="PRK05254.1-1"/>
    <property type="match status" value="1"/>
</dbReference>
<dbReference type="NCBIfam" id="NF003589">
    <property type="entry name" value="PRK05254.1-2"/>
    <property type="match status" value="1"/>
</dbReference>
<dbReference type="NCBIfam" id="NF003591">
    <property type="entry name" value="PRK05254.1-4"/>
    <property type="match status" value="1"/>
</dbReference>
<dbReference type="NCBIfam" id="NF003592">
    <property type="entry name" value="PRK05254.1-5"/>
    <property type="match status" value="1"/>
</dbReference>
<dbReference type="NCBIfam" id="TIGR00628">
    <property type="entry name" value="ung"/>
    <property type="match status" value="1"/>
</dbReference>
<dbReference type="PANTHER" id="PTHR11264">
    <property type="entry name" value="URACIL-DNA GLYCOSYLASE"/>
    <property type="match status" value="1"/>
</dbReference>
<dbReference type="PANTHER" id="PTHR11264:SF0">
    <property type="entry name" value="URACIL-DNA GLYCOSYLASE"/>
    <property type="match status" value="1"/>
</dbReference>
<dbReference type="Pfam" id="PF03167">
    <property type="entry name" value="UDG"/>
    <property type="match status" value="1"/>
</dbReference>
<dbReference type="SMART" id="SM00986">
    <property type="entry name" value="UDG"/>
    <property type="match status" value="1"/>
</dbReference>
<dbReference type="SMART" id="SM00987">
    <property type="entry name" value="UreE_C"/>
    <property type="match status" value="1"/>
</dbReference>
<dbReference type="SUPFAM" id="SSF52141">
    <property type="entry name" value="Uracil-DNA glycosylase-like"/>
    <property type="match status" value="1"/>
</dbReference>
<dbReference type="PROSITE" id="PS00130">
    <property type="entry name" value="U_DNA_GLYCOSYLASE"/>
    <property type="match status" value="1"/>
</dbReference>
<accession>Q0I271</accession>
<sequence length="223" mass="25538">MNTWKEAIGQEKQQPYFQHILQQVQQARQSGRTIYPPQEEVFSAFRLTEFDQVRVVILGQDPYHGVNQAHGLAFSVKPGIAPPPSLVNIYKELSTDIMGFQTPSHGYLVGWAKQGVLLLNTVLTVEQGLAHSHANFGWETFTDRVIHVLNEQRDHLVFLLWGSHAQKKGQFIDRTKHCVLTSPHPSPLSAHRGFFGCRHFSKTNQYLRHHNLTEINWQLPMTI</sequence>
<gene>
    <name evidence="1" type="primary">ung</name>
    <name type="ordered locus">HS_0481</name>
</gene>
<proteinExistence type="inferred from homology"/>
<evidence type="ECO:0000255" key="1">
    <source>
        <dbReference type="HAMAP-Rule" id="MF_00148"/>
    </source>
</evidence>
<name>UNG_HISS1</name>
<comment type="function">
    <text evidence="1">Excises uracil residues from the DNA which can arise as a result of misincorporation of dUMP residues by DNA polymerase or due to deamination of cytosine.</text>
</comment>
<comment type="catalytic activity">
    <reaction evidence="1">
        <text>Hydrolyzes single-stranded DNA or mismatched double-stranded DNA and polynucleotides, releasing free uracil.</text>
        <dbReference type="EC" id="3.2.2.27"/>
    </reaction>
</comment>
<comment type="subcellular location">
    <subcellularLocation>
        <location evidence="1">Cytoplasm</location>
    </subcellularLocation>
</comment>
<comment type="similarity">
    <text evidence="1">Belongs to the uracil-DNA glycosylase (UDG) superfamily. UNG family.</text>
</comment>
<keyword id="KW-0963">Cytoplasm</keyword>
<keyword id="KW-0227">DNA damage</keyword>
<keyword id="KW-0234">DNA repair</keyword>
<keyword id="KW-0378">Hydrolase</keyword>
<protein>
    <recommendedName>
        <fullName evidence="1">Uracil-DNA glycosylase</fullName>
        <shortName evidence="1">UDG</shortName>
        <ecNumber evidence="1">3.2.2.27</ecNumber>
    </recommendedName>
</protein>
<organism>
    <name type="scientific">Histophilus somni (strain 129Pt)</name>
    <name type="common">Haemophilus somnus</name>
    <dbReference type="NCBI Taxonomy" id="205914"/>
    <lineage>
        <taxon>Bacteria</taxon>
        <taxon>Pseudomonadati</taxon>
        <taxon>Pseudomonadota</taxon>
        <taxon>Gammaproteobacteria</taxon>
        <taxon>Pasteurellales</taxon>
        <taxon>Pasteurellaceae</taxon>
        <taxon>Histophilus</taxon>
    </lineage>
</organism>
<reference key="1">
    <citation type="journal article" date="2007" name="J. Bacteriol.">
        <title>Complete genome sequence of Haemophilus somnus (Histophilus somni) strain 129Pt and comparison to Haemophilus ducreyi 35000HP and Haemophilus influenzae Rd.</title>
        <authorList>
            <person name="Challacombe J.F."/>
            <person name="Duncan A.J."/>
            <person name="Brettin T.S."/>
            <person name="Bruce D."/>
            <person name="Chertkov O."/>
            <person name="Detter J.C."/>
            <person name="Han C.S."/>
            <person name="Misra M."/>
            <person name="Richardson P."/>
            <person name="Tapia R."/>
            <person name="Thayer N."/>
            <person name="Xie G."/>
            <person name="Inzana T.J."/>
        </authorList>
    </citation>
    <scope>NUCLEOTIDE SEQUENCE [LARGE SCALE GENOMIC DNA]</scope>
    <source>
        <strain>129Pt</strain>
    </source>
</reference>